<evidence type="ECO:0000255" key="1">
    <source>
        <dbReference type="HAMAP-Rule" id="MF_01368"/>
    </source>
</evidence>
<evidence type="ECO:0000305" key="2"/>
<comment type="subunit">
    <text evidence="1">Part of the 50S ribosomal subunit. Contacts protein L32.</text>
</comment>
<comment type="similarity">
    <text evidence="1">Belongs to the bacterial ribosomal protein bL17 family.</text>
</comment>
<reference key="1">
    <citation type="journal article" date="2004" name="Nat. Genet.">
        <title>Reductive evolution suggested from the complete genome sequence of a plant-pathogenic phytoplasma.</title>
        <authorList>
            <person name="Oshima K."/>
            <person name="Kakizawa S."/>
            <person name="Nishigawa H."/>
            <person name="Jung H.-Y."/>
            <person name="Wei W."/>
            <person name="Suzuki S."/>
            <person name="Arashida R."/>
            <person name="Nakata D."/>
            <person name="Miyata S."/>
            <person name="Ugaki M."/>
            <person name="Namba S."/>
        </authorList>
    </citation>
    <scope>NUCLEOTIDE SEQUENCE [LARGE SCALE GENOMIC DNA]</scope>
    <source>
        <strain>OY-M</strain>
    </source>
</reference>
<protein>
    <recommendedName>
        <fullName evidence="1">Large ribosomal subunit protein bL17</fullName>
    </recommendedName>
    <alternativeName>
        <fullName evidence="2">50S ribosomal protein L17</fullName>
    </alternativeName>
</protein>
<name>RL17_ONYPE</name>
<gene>
    <name evidence="1" type="primary">rplQ</name>
    <name type="synonym">pam228</name>
    <name type="ordered locus">PAM_228</name>
</gene>
<proteinExistence type="inferred from homology"/>
<keyword id="KW-0687">Ribonucleoprotein</keyword>
<keyword id="KW-0689">Ribosomal protein</keyword>
<dbReference type="EMBL" id="AP006628">
    <property type="protein sequence ID" value="BAD04313.1"/>
    <property type="molecule type" value="Genomic_DNA"/>
</dbReference>
<dbReference type="SMR" id="Q6YQZ4"/>
<dbReference type="STRING" id="262768.PAM_228"/>
<dbReference type="KEGG" id="poy:PAM_228"/>
<dbReference type="eggNOG" id="COG0203">
    <property type="taxonomic scope" value="Bacteria"/>
</dbReference>
<dbReference type="HOGENOM" id="CLU_074407_2_2_14"/>
<dbReference type="BioCyc" id="OYEL262768:G1G26-274-MONOMER"/>
<dbReference type="Proteomes" id="UP000002523">
    <property type="component" value="Chromosome"/>
</dbReference>
<dbReference type="GO" id="GO:0015934">
    <property type="term" value="C:large ribosomal subunit"/>
    <property type="evidence" value="ECO:0007669"/>
    <property type="project" value="TreeGrafter"/>
</dbReference>
<dbReference type="GO" id="GO:0003735">
    <property type="term" value="F:structural constituent of ribosome"/>
    <property type="evidence" value="ECO:0007669"/>
    <property type="project" value="InterPro"/>
</dbReference>
<dbReference type="GO" id="GO:0006412">
    <property type="term" value="P:translation"/>
    <property type="evidence" value="ECO:0007669"/>
    <property type="project" value="UniProtKB-UniRule"/>
</dbReference>
<dbReference type="Gene3D" id="3.90.1030.10">
    <property type="entry name" value="Ribosomal protein L17"/>
    <property type="match status" value="1"/>
</dbReference>
<dbReference type="HAMAP" id="MF_01368">
    <property type="entry name" value="Ribosomal_bL17"/>
    <property type="match status" value="1"/>
</dbReference>
<dbReference type="InterPro" id="IPR000456">
    <property type="entry name" value="Ribosomal_bL17"/>
</dbReference>
<dbReference type="InterPro" id="IPR036373">
    <property type="entry name" value="Ribosomal_bL17_sf"/>
</dbReference>
<dbReference type="NCBIfam" id="TIGR00059">
    <property type="entry name" value="L17"/>
    <property type="match status" value="1"/>
</dbReference>
<dbReference type="PANTHER" id="PTHR14413:SF16">
    <property type="entry name" value="LARGE RIBOSOMAL SUBUNIT PROTEIN BL17M"/>
    <property type="match status" value="1"/>
</dbReference>
<dbReference type="PANTHER" id="PTHR14413">
    <property type="entry name" value="RIBOSOMAL PROTEIN L17"/>
    <property type="match status" value="1"/>
</dbReference>
<dbReference type="Pfam" id="PF01196">
    <property type="entry name" value="Ribosomal_L17"/>
    <property type="match status" value="1"/>
</dbReference>
<dbReference type="SUPFAM" id="SSF64263">
    <property type="entry name" value="Prokaryotic ribosomal protein L17"/>
    <property type="match status" value="1"/>
</dbReference>
<accession>Q6YQZ4</accession>
<sequence>MPFSKLGRNKSQRRALLRTLMTDLIVQEKIMITESKAKELQKLADKMVTLSKKNTLHTRRQAKRHLFDEKINDDTTVLQKLFKDISSKYLDRQGGYTRVIKTVPRRGDGAPMAIIAFV</sequence>
<feature type="chain" id="PRO_1000087182" description="Large ribosomal subunit protein bL17">
    <location>
        <begin position="1"/>
        <end position="118"/>
    </location>
</feature>
<organism>
    <name type="scientific">Onion yellows phytoplasma (strain OY-M)</name>
    <dbReference type="NCBI Taxonomy" id="262768"/>
    <lineage>
        <taxon>Bacteria</taxon>
        <taxon>Bacillati</taxon>
        <taxon>Mycoplasmatota</taxon>
        <taxon>Mollicutes</taxon>
        <taxon>Acholeplasmatales</taxon>
        <taxon>Acholeplasmataceae</taxon>
        <taxon>Candidatus Phytoplasma</taxon>
        <taxon>16SrI (Aster yellows group)</taxon>
    </lineage>
</organism>